<organism>
    <name type="scientific">Arabidopsis thaliana</name>
    <name type="common">Mouse-ear cress</name>
    <dbReference type="NCBI Taxonomy" id="3702"/>
    <lineage>
        <taxon>Eukaryota</taxon>
        <taxon>Viridiplantae</taxon>
        <taxon>Streptophyta</taxon>
        <taxon>Embryophyta</taxon>
        <taxon>Tracheophyta</taxon>
        <taxon>Spermatophyta</taxon>
        <taxon>Magnoliopsida</taxon>
        <taxon>eudicotyledons</taxon>
        <taxon>Gunneridae</taxon>
        <taxon>Pentapetalae</taxon>
        <taxon>rosids</taxon>
        <taxon>malvids</taxon>
        <taxon>Brassicales</taxon>
        <taxon>Brassicaceae</taxon>
        <taxon>Camelineae</taxon>
        <taxon>Arabidopsis</taxon>
    </lineage>
</organism>
<dbReference type="EMBL" id="AJ512933">
    <property type="protein sequence ID" value="CAD55558.1"/>
    <property type="molecule type" value="mRNA"/>
</dbReference>
<dbReference type="EMBL" id="AC007138">
    <property type="protein sequence ID" value="AAD22656.1"/>
    <property type="status" value="ALT_SEQ"/>
    <property type="molecule type" value="Genomic_DNA"/>
</dbReference>
<dbReference type="EMBL" id="AL161493">
    <property type="protein sequence ID" value="CAB80687.1"/>
    <property type="status" value="ALT_SEQ"/>
    <property type="molecule type" value="Genomic_DNA"/>
</dbReference>
<dbReference type="EMBL" id="CP002687">
    <property type="protein sequence ID" value="AEE82103.1"/>
    <property type="molecule type" value="Genomic_DNA"/>
</dbReference>
<dbReference type="EMBL" id="AY039552">
    <property type="protein sequence ID" value="AAK62607.1"/>
    <property type="molecule type" value="mRNA"/>
</dbReference>
<dbReference type="EMBL" id="AY050363">
    <property type="protein sequence ID" value="AAK91380.1"/>
    <property type="molecule type" value="mRNA"/>
</dbReference>
<dbReference type="EMBL" id="AY102161">
    <property type="protein sequence ID" value="AAM26728.1"/>
    <property type="molecule type" value="mRNA"/>
</dbReference>
<dbReference type="PIR" id="H85024">
    <property type="entry name" value="H85024"/>
</dbReference>
<dbReference type="RefSeq" id="NP_567219.1">
    <property type="nucleotide sequence ID" value="NM_116425.3"/>
</dbReference>
<dbReference type="SMR" id="Q93W77"/>
<dbReference type="FunCoup" id="Q93W77">
    <property type="interactions" value="828"/>
</dbReference>
<dbReference type="STRING" id="3702.Q93W77"/>
<dbReference type="PaxDb" id="3702-AT4G01940.1"/>
<dbReference type="ProteomicsDB" id="249384"/>
<dbReference type="EnsemblPlants" id="AT4G01940.1">
    <property type="protein sequence ID" value="AT4G01940.1"/>
    <property type="gene ID" value="AT4G01940"/>
</dbReference>
<dbReference type="GeneID" id="828196"/>
<dbReference type="Gramene" id="AT4G01940.1">
    <property type="protein sequence ID" value="AT4G01940.1"/>
    <property type="gene ID" value="AT4G01940"/>
</dbReference>
<dbReference type="KEGG" id="ath:AT4G01940"/>
<dbReference type="Araport" id="AT4G01940"/>
<dbReference type="TAIR" id="AT4G01940">
    <property type="gene designation" value="NFU1"/>
</dbReference>
<dbReference type="eggNOG" id="KOG2358">
    <property type="taxonomic scope" value="Eukaryota"/>
</dbReference>
<dbReference type="HOGENOM" id="CLU_080894_1_0_1"/>
<dbReference type="InParanoid" id="Q93W77"/>
<dbReference type="OMA" id="VEGGDCH"/>
<dbReference type="PhylomeDB" id="Q93W77"/>
<dbReference type="PRO" id="PR:Q93W77"/>
<dbReference type="Proteomes" id="UP000006548">
    <property type="component" value="Chromosome 4"/>
</dbReference>
<dbReference type="ExpressionAtlas" id="Q93W77">
    <property type="expression patterns" value="baseline and differential"/>
</dbReference>
<dbReference type="GO" id="GO:0009507">
    <property type="term" value="C:chloroplast"/>
    <property type="evidence" value="ECO:0000314"/>
    <property type="project" value="TAIR"/>
</dbReference>
<dbReference type="GO" id="GO:0009570">
    <property type="term" value="C:chloroplast stroma"/>
    <property type="evidence" value="ECO:0007669"/>
    <property type="project" value="UniProtKB-SubCell"/>
</dbReference>
<dbReference type="GO" id="GO:0005506">
    <property type="term" value="F:iron ion binding"/>
    <property type="evidence" value="ECO:0007669"/>
    <property type="project" value="InterPro"/>
</dbReference>
<dbReference type="GO" id="GO:0051536">
    <property type="term" value="F:iron-sulfur cluster binding"/>
    <property type="evidence" value="ECO:0007669"/>
    <property type="project" value="InterPro"/>
</dbReference>
<dbReference type="GO" id="GO:0005198">
    <property type="term" value="F:structural molecule activity"/>
    <property type="evidence" value="ECO:0000304"/>
    <property type="project" value="TAIR"/>
</dbReference>
<dbReference type="GO" id="GO:0016226">
    <property type="term" value="P:iron-sulfur cluster assembly"/>
    <property type="evidence" value="ECO:0007669"/>
    <property type="project" value="InterPro"/>
</dbReference>
<dbReference type="FunFam" id="3.30.300.130:FF:000012">
    <property type="entry name" value="NifU-like protein 1 chloroplastic"/>
    <property type="match status" value="1"/>
</dbReference>
<dbReference type="FunFam" id="3.30.300.130:FF:000003">
    <property type="entry name" value="NifU-like protein 3, chloroplastic"/>
    <property type="match status" value="1"/>
</dbReference>
<dbReference type="Gene3D" id="3.30.300.130">
    <property type="entry name" value="Fe-S cluster assembly (FSCA)"/>
    <property type="match status" value="2"/>
</dbReference>
<dbReference type="InterPro" id="IPR034904">
    <property type="entry name" value="FSCA_dom_sf"/>
</dbReference>
<dbReference type="InterPro" id="IPR001075">
    <property type="entry name" value="NIF_FeS_clus_asmbl_NifU_C"/>
</dbReference>
<dbReference type="PANTHER" id="PTHR11178">
    <property type="entry name" value="IRON-SULFUR CLUSTER SCAFFOLD PROTEIN NFU-RELATED"/>
    <property type="match status" value="1"/>
</dbReference>
<dbReference type="PANTHER" id="PTHR11178:SF15">
    <property type="entry name" value="NIFU-LIKE PROTEIN 1, CHLOROPLASTIC"/>
    <property type="match status" value="1"/>
</dbReference>
<dbReference type="Pfam" id="PF01106">
    <property type="entry name" value="NifU"/>
    <property type="match status" value="1"/>
</dbReference>
<dbReference type="SUPFAM" id="SSF117916">
    <property type="entry name" value="Fe-S cluster assembly (FSCA) domain-like"/>
    <property type="match status" value="2"/>
</dbReference>
<protein>
    <recommendedName>
        <fullName>NifU-like protein 1, chloroplastic</fullName>
        <shortName>AtCNfu1</shortName>
        <shortName>AtCnfU-IVb</shortName>
    </recommendedName>
</protein>
<proteinExistence type="evidence at protein level"/>
<reference key="1">
    <citation type="journal article" date="2003" name="Biochem. J.">
        <title>Iron-sulphur cluster assembly in plants: distinct NFU proteins in mitochondria and plastids from Arabidopsis thaliana.</title>
        <authorList>
            <person name="Leon S."/>
            <person name="Touraine B."/>
            <person name="Ribot C."/>
            <person name="Briat J.-F."/>
            <person name="Lobreaux S."/>
        </authorList>
    </citation>
    <scope>NUCLEOTIDE SEQUENCE [MRNA]</scope>
    <scope>TISSUE SPECIFICITY</scope>
    <scope>SUBCELLULAR LOCATION</scope>
    <scope>GENE FAMILY</scope>
    <source>
        <strain>cv. Columbia</strain>
    </source>
</reference>
<reference key="2">
    <citation type="journal article" date="1999" name="Nature">
        <title>Sequence and analysis of chromosome 4 of the plant Arabidopsis thaliana.</title>
        <authorList>
            <person name="Mayer K.F.X."/>
            <person name="Schueller C."/>
            <person name="Wambutt R."/>
            <person name="Murphy G."/>
            <person name="Volckaert G."/>
            <person name="Pohl T."/>
            <person name="Duesterhoeft A."/>
            <person name="Stiekema W."/>
            <person name="Entian K.-D."/>
            <person name="Terryn N."/>
            <person name="Harris B."/>
            <person name="Ansorge W."/>
            <person name="Brandt P."/>
            <person name="Grivell L.A."/>
            <person name="Rieger M."/>
            <person name="Weichselgartner M."/>
            <person name="de Simone V."/>
            <person name="Obermaier B."/>
            <person name="Mache R."/>
            <person name="Mueller M."/>
            <person name="Kreis M."/>
            <person name="Delseny M."/>
            <person name="Puigdomenech P."/>
            <person name="Watson M."/>
            <person name="Schmidtheini T."/>
            <person name="Reichert B."/>
            <person name="Portetelle D."/>
            <person name="Perez-Alonso M."/>
            <person name="Boutry M."/>
            <person name="Bancroft I."/>
            <person name="Vos P."/>
            <person name="Hoheisel J."/>
            <person name="Zimmermann W."/>
            <person name="Wedler H."/>
            <person name="Ridley P."/>
            <person name="Langham S.-A."/>
            <person name="McCullagh B."/>
            <person name="Bilham L."/>
            <person name="Robben J."/>
            <person name="van der Schueren J."/>
            <person name="Grymonprez B."/>
            <person name="Chuang Y.-J."/>
            <person name="Vandenbussche F."/>
            <person name="Braeken M."/>
            <person name="Weltjens I."/>
            <person name="Voet M."/>
            <person name="Bastiaens I."/>
            <person name="Aert R."/>
            <person name="Defoor E."/>
            <person name="Weitzenegger T."/>
            <person name="Bothe G."/>
            <person name="Ramsperger U."/>
            <person name="Hilbert H."/>
            <person name="Braun M."/>
            <person name="Holzer E."/>
            <person name="Brandt A."/>
            <person name="Peters S."/>
            <person name="van Staveren M."/>
            <person name="Dirkse W."/>
            <person name="Mooijman P."/>
            <person name="Klein Lankhorst R."/>
            <person name="Rose M."/>
            <person name="Hauf J."/>
            <person name="Koetter P."/>
            <person name="Berneiser S."/>
            <person name="Hempel S."/>
            <person name="Feldpausch M."/>
            <person name="Lamberth S."/>
            <person name="Van den Daele H."/>
            <person name="De Keyser A."/>
            <person name="Buysshaert C."/>
            <person name="Gielen J."/>
            <person name="Villarroel R."/>
            <person name="De Clercq R."/>
            <person name="van Montagu M."/>
            <person name="Rogers J."/>
            <person name="Cronin A."/>
            <person name="Quail M.A."/>
            <person name="Bray-Allen S."/>
            <person name="Clark L."/>
            <person name="Doggett J."/>
            <person name="Hall S."/>
            <person name="Kay M."/>
            <person name="Lennard N."/>
            <person name="McLay K."/>
            <person name="Mayes R."/>
            <person name="Pettett A."/>
            <person name="Rajandream M.A."/>
            <person name="Lyne M."/>
            <person name="Benes V."/>
            <person name="Rechmann S."/>
            <person name="Borkova D."/>
            <person name="Bloecker H."/>
            <person name="Scharfe M."/>
            <person name="Grimm M."/>
            <person name="Loehnert T.-H."/>
            <person name="Dose S."/>
            <person name="de Haan M."/>
            <person name="Maarse A.C."/>
            <person name="Schaefer M."/>
            <person name="Mueller-Auer S."/>
            <person name="Gabel C."/>
            <person name="Fuchs M."/>
            <person name="Fartmann B."/>
            <person name="Granderath K."/>
            <person name="Dauner D."/>
            <person name="Herzl A."/>
            <person name="Neumann S."/>
            <person name="Argiriou A."/>
            <person name="Vitale D."/>
            <person name="Liguori R."/>
            <person name="Piravandi E."/>
            <person name="Massenet O."/>
            <person name="Quigley F."/>
            <person name="Clabauld G."/>
            <person name="Muendlein A."/>
            <person name="Felber R."/>
            <person name="Schnabl S."/>
            <person name="Hiller R."/>
            <person name="Schmidt W."/>
            <person name="Lecharny A."/>
            <person name="Aubourg S."/>
            <person name="Chefdor F."/>
            <person name="Cooke R."/>
            <person name="Berger C."/>
            <person name="Monfort A."/>
            <person name="Casacuberta E."/>
            <person name="Gibbons T."/>
            <person name="Weber N."/>
            <person name="Vandenbol M."/>
            <person name="Bargues M."/>
            <person name="Terol J."/>
            <person name="Torres A."/>
            <person name="Perez-Perez A."/>
            <person name="Purnelle B."/>
            <person name="Bent E."/>
            <person name="Johnson S."/>
            <person name="Tacon D."/>
            <person name="Jesse T."/>
            <person name="Heijnen L."/>
            <person name="Schwarz S."/>
            <person name="Scholler P."/>
            <person name="Heber S."/>
            <person name="Francs P."/>
            <person name="Bielke C."/>
            <person name="Frishman D."/>
            <person name="Haase D."/>
            <person name="Lemcke K."/>
            <person name="Mewes H.-W."/>
            <person name="Stocker S."/>
            <person name="Zaccaria P."/>
            <person name="Bevan M."/>
            <person name="Wilson R.K."/>
            <person name="de la Bastide M."/>
            <person name="Habermann K."/>
            <person name="Parnell L."/>
            <person name="Dedhia N."/>
            <person name="Gnoj L."/>
            <person name="Schutz K."/>
            <person name="Huang E."/>
            <person name="Spiegel L."/>
            <person name="Sekhon M."/>
            <person name="Murray J."/>
            <person name="Sheet P."/>
            <person name="Cordes M."/>
            <person name="Abu-Threideh J."/>
            <person name="Stoneking T."/>
            <person name="Kalicki J."/>
            <person name="Graves T."/>
            <person name="Harmon G."/>
            <person name="Edwards J."/>
            <person name="Latreille P."/>
            <person name="Courtney L."/>
            <person name="Cloud J."/>
            <person name="Abbott A."/>
            <person name="Scott K."/>
            <person name="Johnson D."/>
            <person name="Minx P."/>
            <person name="Bentley D."/>
            <person name="Fulton B."/>
            <person name="Miller N."/>
            <person name="Greco T."/>
            <person name="Kemp K."/>
            <person name="Kramer J."/>
            <person name="Fulton L."/>
            <person name="Mardis E."/>
            <person name="Dante M."/>
            <person name="Pepin K."/>
            <person name="Hillier L.W."/>
            <person name="Nelson J."/>
            <person name="Spieth J."/>
            <person name="Ryan E."/>
            <person name="Andrews S."/>
            <person name="Geisel C."/>
            <person name="Layman D."/>
            <person name="Du H."/>
            <person name="Ali J."/>
            <person name="Berghoff A."/>
            <person name="Jones K."/>
            <person name="Drone K."/>
            <person name="Cotton M."/>
            <person name="Joshu C."/>
            <person name="Antonoiu B."/>
            <person name="Zidanic M."/>
            <person name="Strong C."/>
            <person name="Sun H."/>
            <person name="Lamar B."/>
            <person name="Yordan C."/>
            <person name="Ma P."/>
            <person name="Zhong J."/>
            <person name="Preston R."/>
            <person name="Vil D."/>
            <person name="Shekher M."/>
            <person name="Matero A."/>
            <person name="Shah R."/>
            <person name="Swaby I.K."/>
            <person name="O'Shaughnessy A."/>
            <person name="Rodriguez M."/>
            <person name="Hoffman J."/>
            <person name="Till S."/>
            <person name="Granat S."/>
            <person name="Shohdy N."/>
            <person name="Hasegawa A."/>
            <person name="Hameed A."/>
            <person name="Lodhi M."/>
            <person name="Johnson A."/>
            <person name="Chen E."/>
            <person name="Marra M.A."/>
            <person name="Martienssen R."/>
            <person name="McCombie W.R."/>
        </authorList>
    </citation>
    <scope>NUCLEOTIDE SEQUENCE [LARGE SCALE GENOMIC DNA]</scope>
    <source>
        <strain>cv. Columbia</strain>
    </source>
</reference>
<reference key="3">
    <citation type="journal article" date="2017" name="Plant J.">
        <title>Araport11: a complete reannotation of the Arabidopsis thaliana reference genome.</title>
        <authorList>
            <person name="Cheng C.Y."/>
            <person name="Krishnakumar V."/>
            <person name="Chan A.P."/>
            <person name="Thibaud-Nissen F."/>
            <person name="Schobel S."/>
            <person name="Town C.D."/>
        </authorList>
    </citation>
    <scope>GENOME REANNOTATION</scope>
    <source>
        <strain>cv. Columbia</strain>
    </source>
</reference>
<reference key="4">
    <citation type="journal article" date="2003" name="Science">
        <title>Empirical analysis of transcriptional activity in the Arabidopsis genome.</title>
        <authorList>
            <person name="Yamada K."/>
            <person name="Lim J."/>
            <person name="Dale J.M."/>
            <person name="Chen H."/>
            <person name="Shinn P."/>
            <person name="Palm C.J."/>
            <person name="Southwick A.M."/>
            <person name="Wu H.C."/>
            <person name="Kim C.J."/>
            <person name="Nguyen M."/>
            <person name="Pham P.K."/>
            <person name="Cheuk R.F."/>
            <person name="Karlin-Newmann G."/>
            <person name="Liu S.X."/>
            <person name="Lam B."/>
            <person name="Sakano H."/>
            <person name="Wu T."/>
            <person name="Yu G."/>
            <person name="Miranda M."/>
            <person name="Quach H.L."/>
            <person name="Tripp M."/>
            <person name="Chang C.H."/>
            <person name="Lee J.M."/>
            <person name="Toriumi M.J."/>
            <person name="Chan M.M."/>
            <person name="Tang C.C."/>
            <person name="Onodera C.S."/>
            <person name="Deng J.M."/>
            <person name="Akiyama K."/>
            <person name="Ansari Y."/>
            <person name="Arakawa T."/>
            <person name="Banh J."/>
            <person name="Banno F."/>
            <person name="Bowser L."/>
            <person name="Brooks S.Y."/>
            <person name="Carninci P."/>
            <person name="Chao Q."/>
            <person name="Choy N."/>
            <person name="Enju A."/>
            <person name="Goldsmith A.D."/>
            <person name="Gurjal M."/>
            <person name="Hansen N.F."/>
            <person name="Hayashizaki Y."/>
            <person name="Johnson-Hopson C."/>
            <person name="Hsuan V.W."/>
            <person name="Iida K."/>
            <person name="Karnes M."/>
            <person name="Khan S."/>
            <person name="Koesema E."/>
            <person name="Ishida J."/>
            <person name="Jiang P.X."/>
            <person name="Jones T."/>
            <person name="Kawai J."/>
            <person name="Kamiya A."/>
            <person name="Meyers C."/>
            <person name="Nakajima M."/>
            <person name="Narusaka M."/>
            <person name="Seki M."/>
            <person name="Sakurai T."/>
            <person name="Satou M."/>
            <person name="Tamse R."/>
            <person name="Vaysberg M."/>
            <person name="Wallender E.K."/>
            <person name="Wong C."/>
            <person name="Yamamura Y."/>
            <person name="Yuan S."/>
            <person name="Shinozaki K."/>
            <person name="Davis R.W."/>
            <person name="Theologis A."/>
            <person name="Ecker J.R."/>
        </authorList>
    </citation>
    <scope>NUCLEOTIDE SEQUENCE [LARGE SCALE MRNA]</scope>
    <source>
        <strain>cv. Columbia</strain>
    </source>
</reference>
<reference key="5">
    <citation type="journal article" date="2004" name="Plant Cell">
        <title>The Arabidopsis chloroplastic NifU-like protein CnfU, which can act as an iron-sulfur cluster scaffold protein, is required for biogenesis of ferredoxin and photosystem I.</title>
        <authorList>
            <person name="Yabe T."/>
            <person name="Morimoto K."/>
            <person name="Kikuchi S."/>
            <person name="Nishio K."/>
            <person name="Terashima I."/>
            <person name="Nakai M."/>
        </authorList>
    </citation>
    <scope>SUBCELLULAR LOCATION</scope>
    <scope>TISSUE SPECIFICITY</scope>
</reference>
<name>NIFU1_ARATH</name>
<keyword id="KW-0150">Chloroplast</keyword>
<keyword id="KW-1015">Disulfide bond</keyword>
<keyword id="KW-0934">Plastid</keyword>
<keyword id="KW-1185">Reference proteome</keyword>
<keyword id="KW-0809">Transit peptide</keyword>
<accession>Q93W77</accession>
<accession>Q9SYJ1</accession>
<sequence length="231" mass="24768">MMASLATSISGSFRILVKSSSTRNGFPVISDQNPSFVLFANKRRHISRTAIFHRSAISGSSQGEKISPLASGVSSGLYSAQTFDLTPQNVDLVLEDVRPFLISDGGNVDVVSVEDGVVSLKLQGACTSCPSSSTTMTMGIERVLKEKFGDALKDIRQVFDEEVKQITVEAVNAHLDILRPAIKNYGGSVEVLSVEGEDCVVKYVGPESIGMGIQAAIKEKFKDISNVTFTS</sequence>
<feature type="transit peptide" description="Chloroplast" evidence="2">
    <location>
        <begin position="1"/>
        <end position="69"/>
    </location>
</feature>
<feature type="chain" id="PRO_0000247612" description="NifU-like protein 1, chloroplastic">
    <location>
        <begin position="70"/>
        <end position="231"/>
    </location>
</feature>
<feature type="disulfide bond" description="Interchain (with C-129)" evidence="1">
    <location>
        <position position="126"/>
    </location>
</feature>
<feature type="disulfide bond" description="Interchain (with C-126)" evidence="1">
    <location>
        <position position="129"/>
    </location>
</feature>
<evidence type="ECO:0000250" key="1"/>
<evidence type="ECO:0000255" key="2"/>
<evidence type="ECO:0000269" key="3">
    <source>
    </source>
</evidence>
<evidence type="ECO:0000269" key="4">
    <source>
    </source>
</evidence>
<evidence type="ECO:0000305" key="5"/>
<comment type="function">
    <text evidence="1">Molecular scaffold for [Fe-S] cluster assembly of chloroplastic iron-sulfur proteins.</text>
</comment>
<comment type="subunit">
    <text evidence="1">Homodimer; disulfide-linked.</text>
</comment>
<comment type="subcellular location">
    <subcellularLocation>
        <location evidence="3 4">Plastid</location>
        <location evidence="3 4">Chloroplast stroma</location>
    </subcellularLocation>
</comment>
<comment type="tissue specificity">
    <text evidence="3 4">Predominantly expressed in floral stalks and siliques. Expressed in leaves, cauline leaves, flower stalks and flowers (at protein level).</text>
</comment>
<comment type="similarity">
    <text evidence="5">Belongs to the NifU family.</text>
</comment>
<comment type="sequence caution" evidence="5">
    <conflict type="erroneous gene model prediction">
        <sequence resource="EMBL-CDS" id="AAD22656"/>
    </conflict>
</comment>
<comment type="sequence caution" evidence="5">
    <conflict type="erroneous gene model prediction">
        <sequence resource="EMBL-CDS" id="CAB80687"/>
    </conflict>
</comment>
<gene>
    <name type="primary">NIFU1</name>
    <name type="synonym">CNFU1</name>
    <name type="synonym">NFU1</name>
    <name type="ordered locus">At4g01940</name>
    <name type="ORF">T7B11.20</name>
</gene>